<dbReference type="EC" id="3.2.2.-" evidence="1"/>
<dbReference type="EC" id="3.2.2.10" evidence="1"/>
<dbReference type="EC" id="3.2.2.4" evidence="1"/>
<dbReference type="EMBL" id="U29581">
    <property type="protein sequence ID" value="AAB40445.1"/>
    <property type="molecule type" value="Genomic_DNA"/>
</dbReference>
<dbReference type="EMBL" id="U00096">
    <property type="protein sequence ID" value="AAC75837.1"/>
    <property type="molecule type" value="Genomic_DNA"/>
</dbReference>
<dbReference type="EMBL" id="AP009048">
    <property type="protein sequence ID" value="BAE76867.1"/>
    <property type="molecule type" value="Genomic_DNA"/>
</dbReference>
<dbReference type="EMBL" id="U01233">
    <property type="status" value="NOT_ANNOTATED_CDS"/>
    <property type="molecule type" value="Genomic_DNA"/>
</dbReference>
<dbReference type="PIR" id="G65061">
    <property type="entry name" value="G65061"/>
</dbReference>
<dbReference type="RefSeq" id="NP_417275.1">
    <property type="nucleotide sequence ID" value="NC_000913.3"/>
</dbReference>
<dbReference type="RefSeq" id="WP_000627995.1">
    <property type="nucleotide sequence ID" value="NZ_STEB01000030.1"/>
</dbReference>
<dbReference type="PDB" id="6GFL">
    <property type="method" value="X-ray"/>
    <property type="resolution" value="2.48 A"/>
    <property type="chains" value="A/B=2-454"/>
</dbReference>
<dbReference type="PDB" id="6GFM">
    <property type="method" value="X-ray"/>
    <property type="resolution" value="2.77 A"/>
    <property type="chains" value="A=2-454"/>
</dbReference>
<dbReference type="PDBsum" id="6GFL"/>
<dbReference type="PDBsum" id="6GFM"/>
<dbReference type="SMR" id="P0ADR8"/>
<dbReference type="BioGRID" id="4261305">
    <property type="interactions" value="18"/>
</dbReference>
<dbReference type="BioGRID" id="851596">
    <property type="interactions" value="1"/>
</dbReference>
<dbReference type="DIP" id="DIP-47955N"/>
<dbReference type="FunCoup" id="P0ADR8">
    <property type="interactions" value="163"/>
</dbReference>
<dbReference type="IntAct" id="P0ADR8">
    <property type="interactions" value="4"/>
</dbReference>
<dbReference type="STRING" id="511145.b2795"/>
<dbReference type="jPOST" id="P0ADR8"/>
<dbReference type="PaxDb" id="511145-b2795"/>
<dbReference type="EnsemblBacteria" id="AAC75837">
    <property type="protein sequence ID" value="AAC75837"/>
    <property type="gene ID" value="b2795"/>
</dbReference>
<dbReference type="GeneID" id="75203814"/>
<dbReference type="GeneID" id="947266"/>
<dbReference type="KEGG" id="ecj:JW2766"/>
<dbReference type="KEGG" id="eco:b2795"/>
<dbReference type="KEGG" id="ecoc:C3026_15370"/>
<dbReference type="PATRIC" id="fig|511145.12.peg.2895"/>
<dbReference type="EchoBASE" id="EB2276"/>
<dbReference type="eggNOG" id="COG1611">
    <property type="taxonomic scope" value="Bacteria"/>
</dbReference>
<dbReference type="HOGENOM" id="CLU_047550_0_0_6"/>
<dbReference type="InParanoid" id="P0ADR8"/>
<dbReference type="OMA" id="EYKYTKK"/>
<dbReference type="OrthoDB" id="9801098at2"/>
<dbReference type="PhylomeDB" id="P0ADR8"/>
<dbReference type="BioCyc" id="EcoCyc:EG12373-MONOMER"/>
<dbReference type="BioCyc" id="MetaCyc:EG12373-MONOMER"/>
<dbReference type="PRO" id="PR:P0ADR8"/>
<dbReference type="Proteomes" id="UP000000625">
    <property type="component" value="Chromosome"/>
</dbReference>
<dbReference type="GO" id="GO:0005829">
    <property type="term" value="C:cytosol"/>
    <property type="evidence" value="ECO:0000314"/>
    <property type="project" value="EcoCyc"/>
</dbReference>
<dbReference type="GO" id="GO:0032991">
    <property type="term" value="C:protein-containing complex"/>
    <property type="evidence" value="ECO:0000314"/>
    <property type="project" value="EcoCyc"/>
</dbReference>
<dbReference type="GO" id="GO:0008714">
    <property type="term" value="F:AMP nucleosidase activity"/>
    <property type="evidence" value="ECO:0000314"/>
    <property type="project" value="EcoCyc"/>
</dbReference>
<dbReference type="GO" id="GO:0097216">
    <property type="term" value="F:guanosine tetraphosphate binding"/>
    <property type="evidence" value="ECO:0000314"/>
    <property type="project" value="EcoCyc"/>
</dbReference>
<dbReference type="GO" id="GO:0042802">
    <property type="term" value="F:identical protein binding"/>
    <property type="evidence" value="ECO:0000314"/>
    <property type="project" value="EcoCyc"/>
</dbReference>
<dbReference type="GO" id="GO:0047723">
    <property type="term" value="F:inosinate nucleosidase activity"/>
    <property type="evidence" value="ECO:0000314"/>
    <property type="project" value="EcoCyc"/>
</dbReference>
<dbReference type="GO" id="GO:0047405">
    <property type="term" value="F:pyrimidine-5'-nucleotide nucleosidase activity"/>
    <property type="evidence" value="ECO:0000314"/>
    <property type="project" value="EcoCyc"/>
</dbReference>
<dbReference type="GO" id="GO:0051289">
    <property type="term" value="P:protein homotetramerization"/>
    <property type="evidence" value="ECO:0000314"/>
    <property type="project" value="EcoCyc"/>
</dbReference>
<dbReference type="FunFam" id="3.30.1850.10:FF:000001">
    <property type="entry name" value="LOG family protein YgdH"/>
    <property type="match status" value="1"/>
</dbReference>
<dbReference type="FunFam" id="3.40.50.450:FF:000007">
    <property type="entry name" value="LOG family protein ygdH"/>
    <property type="match status" value="1"/>
</dbReference>
<dbReference type="Gene3D" id="3.40.50.450">
    <property type="match status" value="1"/>
</dbReference>
<dbReference type="Gene3D" id="3.30.1850.10">
    <property type="entry name" value="MoCo carrier protein-like"/>
    <property type="match status" value="1"/>
</dbReference>
<dbReference type="InterPro" id="IPR031100">
    <property type="entry name" value="LOG_fam"/>
</dbReference>
<dbReference type="InterPro" id="IPR052341">
    <property type="entry name" value="LOG_family_nucleotidases"/>
</dbReference>
<dbReference type="InterPro" id="IPR049788">
    <property type="entry name" value="PpnN"/>
</dbReference>
<dbReference type="InterPro" id="IPR037153">
    <property type="entry name" value="PpnN-like_sf"/>
</dbReference>
<dbReference type="InterPro" id="IPR021826">
    <property type="entry name" value="PpnN_C"/>
</dbReference>
<dbReference type="InterPro" id="IPR027820">
    <property type="entry name" value="PpnN_N"/>
</dbReference>
<dbReference type="NCBIfam" id="NF038390">
    <property type="entry name" value="Nsidase_PpnN"/>
    <property type="match status" value="1"/>
</dbReference>
<dbReference type="PANTHER" id="PTHR43393">
    <property type="entry name" value="CYTOKININ RIBOSIDE 5'-MONOPHOSPHATE PHOSPHORIBOHYDROLASE"/>
    <property type="match status" value="1"/>
</dbReference>
<dbReference type="PANTHER" id="PTHR43393:SF1">
    <property type="entry name" value="PYRIMIDINE_PURINE NUCLEOTIDE 5'-MONOPHOSPHATE NUCLEOSIDASE"/>
    <property type="match status" value="1"/>
</dbReference>
<dbReference type="Pfam" id="PF14793">
    <property type="entry name" value="DUF4478"/>
    <property type="match status" value="1"/>
</dbReference>
<dbReference type="Pfam" id="PF03641">
    <property type="entry name" value="Lysine_decarbox"/>
    <property type="match status" value="1"/>
</dbReference>
<dbReference type="Pfam" id="PF11892">
    <property type="entry name" value="PpnN_C"/>
    <property type="match status" value="1"/>
</dbReference>
<dbReference type="SUPFAM" id="SSF102405">
    <property type="entry name" value="MCP/YpsA-like"/>
    <property type="match status" value="1"/>
</dbReference>
<proteinExistence type="evidence at protein level"/>
<evidence type="ECO:0000269" key="1">
    <source>
    </source>
</evidence>
<evidence type="ECO:0000303" key="2">
    <source>
    </source>
</evidence>
<evidence type="ECO:0000305" key="3"/>
<evidence type="ECO:0000305" key="4">
    <source>
    </source>
</evidence>
<evidence type="ECO:0000312" key="5">
    <source>
        <dbReference type="EMBL" id="AAC75837.1"/>
    </source>
</evidence>
<evidence type="ECO:0007829" key="6">
    <source>
        <dbReference type="PDB" id="6GFL"/>
    </source>
</evidence>
<evidence type="ECO:0007829" key="7">
    <source>
        <dbReference type="PDB" id="6GFM"/>
    </source>
</evidence>
<organism>
    <name type="scientific">Escherichia coli (strain K12)</name>
    <dbReference type="NCBI Taxonomy" id="83333"/>
    <lineage>
        <taxon>Bacteria</taxon>
        <taxon>Pseudomonadati</taxon>
        <taxon>Pseudomonadota</taxon>
        <taxon>Gammaproteobacteria</taxon>
        <taxon>Enterobacterales</taxon>
        <taxon>Enterobacteriaceae</taxon>
        <taxon>Escherichia</taxon>
    </lineage>
</organism>
<sequence>MITHISPLGSMDMLSQLEVDMLKRTASSDLYQLFRNCSLAVLNSGSLTDNSKELLSRFENFDINVLRRERGVKLELINPPEEAFVDGRIIRALQANLFAVLRDILFVYGQIHNTVRFPNLNLDNSVHITNLVFSILRNARALHVGEAPNMVVCWGGHSINENEYLYARRVGNQLGLRELNICTGCGPGAMEAPMKGAAVGHAQQRYKDSRFIGMTEPSIIAAEPPNPLVNELIIMPDIEKRLEAFVRIAHGIIIFPGGVGTAEELLYLLGILMNPANKDQVLPLILTGPKESADYFRVLDEFVVHTLGENARRHYRIIIDDAAEVARQMKKSMPLVKENRRDTGDAYSFNWSMRIAPDLQMPFEPSHENMANLKLYPDQPVEVLAADLRRAFSGIVAGNVKEVGIRAIEEFGPYKINGDKEIMRRMDDLLQGFVAQHRMKLPGSAYIPCYEICT</sequence>
<protein>
    <recommendedName>
        <fullName evidence="2">Pyrimidine/purine nucleotide 5'-monophosphate nucleosidase</fullName>
        <ecNumber evidence="1">3.2.2.-</ecNumber>
        <ecNumber evidence="1">3.2.2.10</ecNumber>
    </recommendedName>
    <alternativeName>
        <fullName evidence="4">AMP nucleosidase</fullName>
        <ecNumber evidence="1">3.2.2.4</ecNumber>
    </alternativeName>
    <alternativeName>
        <fullName evidence="4">CMP nucleosidase</fullName>
    </alternativeName>
    <alternativeName>
        <fullName evidence="4">GMP nucleosidase</fullName>
    </alternativeName>
    <alternativeName>
        <fullName evidence="4">IMP nucleosidase</fullName>
    </alternativeName>
    <alternativeName>
        <fullName evidence="4">UMP nucleosidase</fullName>
    </alternativeName>
    <alternativeName>
        <fullName evidence="4">dTMP nucleosidase</fullName>
    </alternativeName>
</protein>
<gene>
    <name evidence="2" type="primary">ppnN</name>
    <name evidence="5" type="synonym">ygdH</name>
    <name type="ordered locus">b2795</name>
    <name type="ordered locus">JW2766</name>
</gene>
<feature type="chain" id="PRO_0000169334" description="Pyrimidine/purine nucleotide 5'-monophosphate nucleosidase">
    <location>
        <begin position="1"/>
        <end position="454"/>
    </location>
</feature>
<feature type="sequence conflict" description="In Ref. 3; U01233." evidence="3" ref="3">
    <original>R</original>
    <variation>A</variation>
    <location>
        <position position="389"/>
    </location>
</feature>
<feature type="strand" evidence="6">
    <location>
        <begin position="3"/>
        <end position="6"/>
    </location>
</feature>
<feature type="strand" evidence="7">
    <location>
        <begin position="9"/>
        <end position="11"/>
    </location>
</feature>
<feature type="helix" evidence="6">
    <location>
        <begin position="16"/>
        <end position="21"/>
    </location>
</feature>
<feature type="strand" evidence="6">
    <location>
        <begin position="23"/>
        <end position="27"/>
    </location>
</feature>
<feature type="helix" evidence="6">
    <location>
        <begin position="30"/>
        <end position="42"/>
    </location>
</feature>
<feature type="turn" evidence="6">
    <location>
        <begin position="43"/>
        <end position="45"/>
    </location>
</feature>
<feature type="helix" evidence="6">
    <location>
        <begin position="52"/>
        <end position="57"/>
    </location>
</feature>
<feature type="strand" evidence="6">
    <location>
        <begin position="62"/>
        <end position="68"/>
    </location>
</feature>
<feature type="strand" evidence="6">
    <location>
        <begin position="71"/>
        <end position="78"/>
    </location>
</feature>
<feature type="helix" evidence="6">
    <location>
        <begin position="81"/>
        <end position="83"/>
    </location>
</feature>
<feature type="helix" evidence="6">
    <location>
        <begin position="91"/>
        <end position="111"/>
    </location>
</feature>
<feature type="turn" evidence="7">
    <location>
        <begin position="114"/>
        <end position="116"/>
    </location>
</feature>
<feature type="helix" evidence="6">
    <location>
        <begin position="124"/>
        <end position="138"/>
    </location>
</feature>
<feature type="strand" evidence="6">
    <location>
        <begin position="150"/>
        <end position="154"/>
    </location>
</feature>
<feature type="helix" evidence="6">
    <location>
        <begin position="161"/>
        <end position="176"/>
    </location>
</feature>
<feature type="strand" evidence="6">
    <location>
        <begin position="180"/>
        <end position="183"/>
    </location>
</feature>
<feature type="strand" evidence="7">
    <location>
        <begin position="185"/>
        <end position="187"/>
    </location>
</feature>
<feature type="helix" evidence="6">
    <location>
        <begin position="188"/>
        <end position="190"/>
    </location>
</feature>
<feature type="helix" evidence="6">
    <location>
        <begin position="192"/>
        <end position="203"/>
    </location>
</feature>
<feature type="strand" evidence="6">
    <location>
        <begin position="211"/>
        <end position="215"/>
    </location>
</feature>
<feature type="turn" evidence="6">
    <location>
        <begin position="217"/>
        <end position="222"/>
    </location>
</feature>
<feature type="strand" evidence="6">
    <location>
        <begin position="230"/>
        <end position="234"/>
    </location>
</feature>
<feature type="helix" evidence="6">
    <location>
        <begin position="238"/>
        <end position="248"/>
    </location>
</feature>
<feature type="strand" evidence="6">
    <location>
        <begin position="250"/>
        <end position="254"/>
    </location>
</feature>
<feature type="helix" evidence="6">
    <location>
        <begin position="259"/>
        <end position="272"/>
    </location>
</feature>
<feature type="helix" evidence="6">
    <location>
        <begin position="275"/>
        <end position="277"/>
    </location>
</feature>
<feature type="strand" evidence="6">
    <location>
        <begin position="284"/>
        <end position="288"/>
    </location>
</feature>
<feature type="helix" evidence="6">
    <location>
        <begin position="290"/>
        <end position="292"/>
    </location>
</feature>
<feature type="helix" evidence="6">
    <location>
        <begin position="293"/>
        <end position="306"/>
    </location>
</feature>
<feature type="helix" evidence="6">
    <location>
        <begin position="309"/>
        <end position="314"/>
    </location>
</feature>
<feature type="strand" evidence="6">
    <location>
        <begin position="316"/>
        <end position="320"/>
    </location>
</feature>
<feature type="helix" evidence="6">
    <location>
        <begin position="322"/>
        <end position="341"/>
    </location>
</feature>
<feature type="turn" evidence="6">
    <location>
        <begin position="342"/>
        <end position="344"/>
    </location>
</feature>
<feature type="strand" evidence="6">
    <location>
        <begin position="347"/>
        <end position="349"/>
    </location>
</feature>
<feature type="helix" evidence="6">
    <location>
        <begin position="357"/>
        <end position="360"/>
    </location>
</feature>
<feature type="helix" evidence="6">
    <location>
        <begin position="367"/>
        <end position="371"/>
    </location>
</feature>
<feature type="strand" evidence="7">
    <location>
        <begin position="375"/>
        <end position="379"/>
    </location>
</feature>
<feature type="helix" evidence="6">
    <location>
        <begin position="381"/>
        <end position="400"/>
    </location>
</feature>
<feature type="helix" evidence="6">
    <location>
        <begin position="402"/>
        <end position="411"/>
    </location>
</feature>
<feature type="helix" evidence="6">
    <location>
        <begin position="422"/>
        <end position="435"/>
    </location>
</feature>
<name>PPNN_ECOLI</name>
<accession>P0ADR8</accession>
<accession>P37350</accession>
<accession>Q2MA39</accession>
<accession>Q46921</accession>
<comment type="function">
    <text evidence="1">Catalyzes the hydrolysis of the N-glycosidic bond of diverse pyrimidine and purine nucleotide 5'-monophosphates, to form ribose 5-phosphate and the corresponding free base. Can use AMP, GMP, IMP, CMP, dTMP and UMP as substrates. Cannot catalyze the reverse reactions. Is required for optimal growth in glucose minimal medium, possibly because it contributes to nucleoside pool homeostasis by degrading excess nucleotides and feeding back the ribose moiety to catabolism.</text>
</comment>
<comment type="catalytic activity">
    <reaction evidence="1">
        <text>a pyrimidine ribonucleoside 5'-phosphate + H2O = a pyrimidine nucleobase + D-ribose 5-phosphate</text>
        <dbReference type="Rhea" id="RHEA:13425"/>
        <dbReference type="ChEBI" id="CHEBI:15377"/>
        <dbReference type="ChEBI" id="CHEBI:26432"/>
        <dbReference type="ChEBI" id="CHEBI:78346"/>
        <dbReference type="ChEBI" id="CHEBI:138238"/>
        <dbReference type="EC" id="3.2.2.10"/>
    </reaction>
</comment>
<comment type="catalytic activity">
    <reaction evidence="1">
        <text>AMP + H2O = adenine + D-ribose 5-phosphate</text>
        <dbReference type="Rhea" id="RHEA:20129"/>
        <dbReference type="ChEBI" id="CHEBI:15377"/>
        <dbReference type="ChEBI" id="CHEBI:16708"/>
        <dbReference type="ChEBI" id="CHEBI:78346"/>
        <dbReference type="ChEBI" id="CHEBI:456215"/>
        <dbReference type="EC" id="3.2.2.4"/>
    </reaction>
</comment>
<comment type="catalytic activity">
    <reaction evidence="1">
        <text>GMP + H2O = guanine + D-ribose 5-phosphate</text>
        <dbReference type="Rhea" id="RHEA:52708"/>
        <dbReference type="ChEBI" id="CHEBI:15377"/>
        <dbReference type="ChEBI" id="CHEBI:16235"/>
        <dbReference type="ChEBI" id="CHEBI:58115"/>
        <dbReference type="ChEBI" id="CHEBI:78346"/>
    </reaction>
</comment>
<comment type="catalytic activity">
    <reaction evidence="1">
        <text>CMP + H2O = cytosine + D-ribose 5-phosphate</text>
        <dbReference type="Rhea" id="RHEA:30075"/>
        <dbReference type="ChEBI" id="CHEBI:15377"/>
        <dbReference type="ChEBI" id="CHEBI:16040"/>
        <dbReference type="ChEBI" id="CHEBI:60377"/>
        <dbReference type="ChEBI" id="CHEBI:78346"/>
        <dbReference type="EC" id="3.2.2.10"/>
    </reaction>
</comment>
<comment type="catalytic activity">
    <reaction evidence="1">
        <text>IMP + H2O = hypoxanthine + D-ribose 5-phosphate</text>
        <dbReference type="Rhea" id="RHEA:20469"/>
        <dbReference type="ChEBI" id="CHEBI:15377"/>
        <dbReference type="ChEBI" id="CHEBI:17368"/>
        <dbReference type="ChEBI" id="CHEBI:58053"/>
        <dbReference type="ChEBI" id="CHEBI:78346"/>
    </reaction>
</comment>
<comment type="catalytic activity">
    <reaction evidence="1">
        <text>UMP + H2O = D-ribose 5-phosphate + uracil</text>
        <dbReference type="Rhea" id="RHEA:52704"/>
        <dbReference type="ChEBI" id="CHEBI:15377"/>
        <dbReference type="ChEBI" id="CHEBI:17568"/>
        <dbReference type="ChEBI" id="CHEBI:57865"/>
        <dbReference type="ChEBI" id="CHEBI:78346"/>
    </reaction>
</comment>
<comment type="catalytic activity">
    <reaction evidence="1">
        <text>dTMP + H2O = 2-deoxy-D-ribose 5-phosphate + thymine</text>
        <dbReference type="Rhea" id="RHEA:52712"/>
        <dbReference type="ChEBI" id="CHEBI:15377"/>
        <dbReference type="ChEBI" id="CHEBI:17821"/>
        <dbReference type="ChEBI" id="CHEBI:62877"/>
        <dbReference type="ChEBI" id="CHEBI:63528"/>
    </reaction>
</comment>
<comment type="disruption phenotype">
    <text evidence="1">Cells lacking this gene show a reduced growth rate and yield in glucose minimal medium compared to wild-type. They also show a consistent change in the level of several metabolites whose masses can correspond to adenine, xanthine or 4-hydroxy-L-threonine.</text>
</comment>
<comment type="similarity">
    <text evidence="3">Belongs to the LOG family.</text>
</comment>
<keyword id="KW-0002">3D-structure</keyword>
<keyword id="KW-0378">Hydrolase</keyword>
<keyword id="KW-1185">Reference proteome</keyword>
<reference key="1">
    <citation type="journal article" date="1997" name="Science">
        <title>The complete genome sequence of Escherichia coli K-12.</title>
        <authorList>
            <person name="Blattner F.R."/>
            <person name="Plunkett G. III"/>
            <person name="Bloch C.A."/>
            <person name="Perna N.T."/>
            <person name="Burland V."/>
            <person name="Riley M."/>
            <person name="Collado-Vides J."/>
            <person name="Glasner J.D."/>
            <person name="Rode C.K."/>
            <person name="Mayhew G.F."/>
            <person name="Gregor J."/>
            <person name="Davis N.W."/>
            <person name="Kirkpatrick H.A."/>
            <person name="Goeden M.A."/>
            <person name="Rose D.J."/>
            <person name="Mau B."/>
            <person name="Shao Y."/>
        </authorList>
    </citation>
    <scope>NUCLEOTIDE SEQUENCE [LARGE SCALE GENOMIC DNA]</scope>
    <source>
        <strain>K12 / MG1655 / ATCC 47076</strain>
    </source>
</reference>
<reference key="2">
    <citation type="journal article" date="2006" name="Mol. Syst. Biol.">
        <title>Highly accurate genome sequences of Escherichia coli K-12 strains MG1655 and W3110.</title>
        <authorList>
            <person name="Hayashi K."/>
            <person name="Morooka N."/>
            <person name="Yamamoto Y."/>
            <person name="Fujita K."/>
            <person name="Isono K."/>
            <person name="Choi S."/>
            <person name="Ohtsubo E."/>
            <person name="Baba T."/>
            <person name="Wanner B.L."/>
            <person name="Mori H."/>
            <person name="Horiuchi T."/>
        </authorList>
    </citation>
    <scope>NUCLEOTIDE SEQUENCE [LARGE SCALE GENOMIC DNA]</scope>
    <source>
        <strain>K12 / W3110 / ATCC 27325 / DSM 5911</strain>
    </source>
</reference>
<reference key="3">
    <citation type="submission" date="1993-09" db="EMBL/GenBank/DDBJ databases">
        <authorList>
            <person name="Shao Z."/>
            <person name="Newman E.B."/>
        </authorList>
    </citation>
    <scope>NUCLEOTIDE SEQUENCE [GENOMIC DNA] OF 374-454</scope>
    <source>
        <strain>K12</strain>
    </source>
</reference>
<reference key="4">
    <citation type="unpublished observations" date="1994-02">
        <authorList>
            <person name="Rudd K.E."/>
        </authorList>
    </citation>
    <scope>IDENTIFICATION</scope>
</reference>
<reference key="5">
    <citation type="journal article" date="2017" name="Nat. Methods">
        <title>Nontargeted in vitro metabolomics for high-throughput identification of novel enzymes in Escherichia coli.</title>
        <authorList>
            <person name="Sevin D.C."/>
            <person name="Fuhrer T."/>
            <person name="Zamboni N."/>
            <person name="Sauer U."/>
        </authorList>
    </citation>
    <scope>FUNCTION</scope>
    <scope>CATALYTIC ACTIVITY</scope>
    <scope>DISRUPTION PHENOTYPE</scope>
    <source>
        <strain>K12</strain>
    </source>
</reference>